<feature type="chain" id="PRO_0000359333" description="5'-methylthioadenosine/S-adenosylhomocysteine nucleosidase">
    <location>
        <begin position="1"/>
        <end position="232"/>
    </location>
</feature>
<feature type="active site" description="Proton acceptor" evidence="1">
    <location>
        <position position="12"/>
    </location>
</feature>
<feature type="active site" description="Proton donor" evidence="1">
    <location>
        <position position="197"/>
    </location>
</feature>
<feature type="binding site" evidence="1">
    <location>
        <position position="78"/>
    </location>
    <ligand>
        <name>substrate</name>
    </ligand>
</feature>
<feature type="binding site" evidence="1">
    <location>
        <position position="152"/>
    </location>
    <ligand>
        <name>substrate</name>
    </ligand>
</feature>
<feature type="binding site" evidence="1">
    <location>
        <begin position="173"/>
        <end position="174"/>
    </location>
    <ligand>
        <name>substrate</name>
    </ligand>
</feature>
<proteinExistence type="inferred from homology"/>
<reference key="1">
    <citation type="journal article" date="2011" name="J. Bacteriol.">
        <title>Comparative genomics of 28 Salmonella enterica isolates: evidence for CRISPR-mediated adaptive sublineage evolution.</title>
        <authorList>
            <person name="Fricke W.F."/>
            <person name="Mammel M.K."/>
            <person name="McDermott P.F."/>
            <person name="Tartera C."/>
            <person name="White D.G."/>
            <person name="Leclerc J.E."/>
            <person name="Ravel J."/>
            <person name="Cebula T.A."/>
        </authorList>
    </citation>
    <scope>NUCLEOTIDE SEQUENCE [LARGE SCALE GENOMIC DNA]</scope>
    <source>
        <strain>SL254</strain>
    </source>
</reference>
<dbReference type="EC" id="3.2.2.9" evidence="1"/>
<dbReference type="EMBL" id="CP001113">
    <property type="protein sequence ID" value="ACF63885.1"/>
    <property type="molecule type" value="Genomic_DNA"/>
</dbReference>
<dbReference type="RefSeq" id="WP_000689824.1">
    <property type="nucleotide sequence ID" value="NZ_CCMR01000003.1"/>
</dbReference>
<dbReference type="SMR" id="B4SUY9"/>
<dbReference type="KEGG" id="see:SNSL254_A0228"/>
<dbReference type="HOGENOM" id="CLU_031248_2_2_6"/>
<dbReference type="UniPathway" id="UPA00904">
    <property type="reaction ID" value="UER00871"/>
</dbReference>
<dbReference type="Proteomes" id="UP000008824">
    <property type="component" value="Chromosome"/>
</dbReference>
<dbReference type="GO" id="GO:0005829">
    <property type="term" value="C:cytosol"/>
    <property type="evidence" value="ECO:0007669"/>
    <property type="project" value="TreeGrafter"/>
</dbReference>
<dbReference type="GO" id="GO:0008782">
    <property type="term" value="F:adenosylhomocysteine nucleosidase activity"/>
    <property type="evidence" value="ECO:0007669"/>
    <property type="project" value="UniProtKB-UniRule"/>
</dbReference>
<dbReference type="GO" id="GO:0008930">
    <property type="term" value="F:methylthioadenosine nucleosidase activity"/>
    <property type="evidence" value="ECO:0007669"/>
    <property type="project" value="UniProtKB-UniRule"/>
</dbReference>
<dbReference type="GO" id="GO:0019509">
    <property type="term" value="P:L-methionine salvage from methylthioadenosine"/>
    <property type="evidence" value="ECO:0007669"/>
    <property type="project" value="UniProtKB-UniRule"/>
</dbReference>
<dbReference type="GO" id="GO:0019284">
    <property type="term" value="P:L-methionine salvage from S-adenosylmethionine"/>
    <property type="evidence" value="ECO:0007669"/>
    <property type="project" value="TreeGrafter"/>
</dbReference>
<dbReference type="GO" id="GO:0046124">
    <property type="term" value="P:purine deoxyribonucleoside catabolic process"/>
    <property type="evidence" value="ECO:0007669"/>
    <property type="project" value="UniProtKB-UniRule"/>
</dbReference>
<dbReference type="CDD" id="cd09008">
    <property type="entry name" value="MTAN"/>
    <property type="match status" value="1"/>
</dbReference>
<dbReference type="FunFam" id="3.40.50.1580:FF:000001">
    <property type="entry name" value="MTA/SAH nucleosidase family protein"/>
    <property type="match status" value="1"/>
</dbReference>
<dbReference type="Gene3D" id="3.40.50.1580">
    <property type="entry name" value="Nucleoside phosphorylase domain"/>
    <property type="match status" value="1"/>
</dbReference>
<dbReference type="HAMAP" id="MF_01684">
    <property type="entry name" value="Salvage_MtnN"/>
    <property type="match status" value="1"/>
</dbReference>
<dbReference type="InterPro" id="IPR010049">
    <property type="entry name" value="MTA_SAH_Nsdase"/>
</dbReference>
<dbReference type="InterPro" id="IPR000845">
    <property type="entry name" value="Nucleoside_phosphorylase_d"/>
</dbReference>
<dbReference type="InterPro" id="IPR035994">
    <property type="entry name" value="Nucleoside_phosphorylase_sf"/>
</dbReference>
<dbReference type="NCBIfam" id="TIGR01704">
    <property type="entry name" value="MTA_SAH-Nsdase"/>
    <property type="match status" value="1"/>
</dbReference>
<dbReference type="NCBIfam" id="NF004079">
    <property type="entry name" value="PRK05584.1"/>
    <property type="match status" value="1"/>
</dbReference>
<dbReference type="PANTHER" id="PTHR46832">
    <property type="entry name" value="5'-METHYLTHIOADENOSINE/S-ADENOSYLHOMOCYSTEINE NUCLEOSIDASE"/>
    <property type="match status" value="1"/>
</dbReference>
<dbReference type="PANTHER" id="PTHR46832:SF1">
    <property type="entry name" value="5'-METHYLTHIOADENOSINE_S-ADENOSYLHOMOCYSTEINE NUCLEOSIDASE"/>
    <property type="match status" value="1"/>
</dbReference>
<dbReference type="Pfam" id="PF01048">
    <property type="entry name" value="PNP_UDP_1"/>
    <property type="match status" value="1"/>
</dbReference>
<dbReference type="SUPFAM" id="SSF53167">
    <property type="entry name" value="Purine and uridine phosphorylases"/>
    <property type="match status" value="1"/>
</dbReference>
<gene>
    <name evidence="1" type="primary">mtnN</name>
    <name type="ordered locus">SNSL254_A0228</name>
</gene>
<evidence type="ECO:0000255" key="1">
    <source>
        <dbReference type="HAMAP-Rule" id="MF_01684"/>
    </source>
</evidence>
<sequence>MKIGIIGAMEEEVTLLRDKIDNRQTITLGGCEIYTGQLNGTEVALLKSGIGKVAAALGATLLLEHCKPDVIINTGSAGGLASTLKVGDIVVSDEARYHDADVTAFGYEYGQLPGCPAGFKADDKLIAAAESCIRELNLNAVRGLIVSGDAFINGSVGLAKIRHNFPDAVAVEMEATAIAHVCYNFSVPFVVVRAISDVADQQSHLSFDEFLAVAAKQSTLMVETLVQKLAHG</sequence>
<accession>B4SUY9</accession>
<name>MTNN_SALNS</name>
<protein>
    <recommendedName>
        <fullName evidence="1">5'-methylthioadenosine/S-adenosylhomocysteine nucleosidase</fullName>
        <shortName evidence="1">MTA/SAH nucleosidase</shortName>
        <shortName evidence="1">MTAN</shortName>
        <ecNumber evidence="1">3.2.2.9</ecNumber>
    </recommendedName>
    <alternativeName>
        <fullName evidence="1">5'-deoxyadenosine nucleosidase</fullName>
        <shortName evidence="1">DOA nucleosidase</shortName>
        <shortName evidence="1">dAdo nucleosidase</shortName>
    </alternativeName>
    <alternativeName>
        <fullName evidence="1">5'-methylthioadenosine nucleosidase</fullName>
        <shortName evidence="1">MTA nucleosidase</shortName>
    </alternativeName>
    <alternativeName>
        <fullName evidence="1">S-adenosylhomocysteine nucleosidase</fullName>
        <shortName evidence="1">AdoHcy nucleosidase</shortName>
        <shortName evidence="1">SAH nucleosidase</shortName>
        <shortName evidence="1">SRH nucleosidase</shortName>
    </alternativeName>
</protein>
<keyword id="KW-0028">Amino-acid biosynthesis</keyword>
<keyword id="KW-0378">Hydrolase</keyword>
<keyword id="KW-0486">Methionine biosynthesis</keyword>
<comment type="function">
    <text evidence="1">Catalyzes the irreversible cleavage of the glycosidic bond in both 5'-methylthioadenosine (MTA) and S-adenosylhomocysteine (SAH/AdoHcy) to adenine and the corresponding thioribose, 5'-methylthioribose and S-ribosylhomocysteine, respectively. Also cleaves 5'-deoxyadenosine, a toxic by-product of radical S-adenosylmethionine (SAM) enzymes, into 5-deoxyribose and adenine. Thus, is required for in vivo function of the radical SAM enzymes biotin synthase and lipoic acid synthase, that are inhibited by 5'-deoxyadenosine accumulation.</text>
</comment>
<comment type="catalytic activity">
    <reaction evidence="1">
        <text>S-adenosyl-L-homocysteine + H2O = S-(5-deoxy-D-ribos-5-yl)-L-homocysteine + adenine</text>
        <dbReference type="Rhea" id="RHEA:17805"/>
        <dbReference type="ChEBI" id="CHEBI:15377"/>
        <dbReference type="ChEBI" id="CHEBI:16708"/>
        <dbReference type="ChEBI" id="CHEBI:57856"/>
        <dbReference type="ChEBI" id="CHEBI:58195"/>
        <dbReference type="EC" id="3.2.2.9"/>
    </reaction>
</comment>
<comment type="catalytic activity">
    <reaction evidence="1">
        <text>S-methyl-5'-thioadenosine + H2O = 5-(methylsulfanyl)-D-ribose + adenine</text>
        <dbReference type="Rhea" id="RHEA:13617"/>
        <dbReference type="ChEBI" id="CHEBI:15377"/>
        <dbReference type="ChEBI" id="CHEBI:16708"/>
        <dbReference type="ChEBI" id="CHEBI:17509"/>
        <dbReference type="ChEBI" id="CHEBI:78440"/>
        <dbReference type="EC" id="3.2.2.9"/>
    </reaction>
</comment>
<comment type="catalytic activity">
    <reaction evidence="1">
        <text>5'-deoxyadenosine + H2O = 5-deoxy-D-ribose + adenine</text>
        <dbReference type="Rhea" id="RHEA:29859"/>
        <dbReference type="ChEBI" id="CHEBI:15377"/>
        <dbReference type="ChEBI" id="CHEBI:16708"/>
        <dbReference type="ChEBI" id="CHEBI:17319"/>
        <dbReference type="ChEBI" id="CHEBI:149540"/>
        <dbReference type="EC" id="3.2.2.9"/>
    </reaction>
    <physiologicalReaction direction="left-to-right" evidence="1">
        <dbReference type="Rhea" id="RHEA:29860"/>
    </physiologicalReaction>
</comment>
<comment type="pathway">
    <text evidence="1">Amino-acid biosynthesis; L-methionine biosynthesis via salvage pathway; S-methyl-5-thio-alpha-D-ribose 1-phosphate from S-methyl-5'-thioadenosine (hydrolase route): step 1/2.</text>
</comment>
<comment type="subunit">
    <text evidence="1">Homodimer.</text>
</comment>
<comment type="similarity">
    <text evidence="1">Belongs to the PNP/UDP phosphorylase family. MtnN subfamily.</text>
</comment>
<organism>
    <name type="scientific">Salmonella newport (strain SL254)</name>
    <dbReference type="NCBI Taxonomy" id="423368"/>
    <lineage>
        <taxon>Bacteria</taxon>
        <taxon>Pseudomonadati</taxon>
        <taxon>Pseudomonadota</taxon>
        <taxon>Gammaproteobacteria</taxon>
        <taxon>Enterobacterales</taxon>
        <taxon>Enterobacteriaceae</taxon>
        <taxon>Salmonella</taxon>
    </lineage>
</organism>